<protein>
    <recommendedName>
        <fullName>Tartrate-resistant acid phosphatase type 5</fullName>
        <shortName>TR-AP</shortName>
        <ecNumber>3.1.3.2</ecNumber>
    </recommendedName>
    <alternativeName>
        <fullName>Tartrate-resistant acid ATPase</fullName>
        <shortName>TrATPase</shortName>
    </alternativeName>
    <alternativeName>
        <fullName>Type 5 acid phosphatase</fullName>
    </alternativeName>
</protein>
<evidence type="ECO:0000250" key="1"/>
<evidence type="ECO:0000255" key="2"/>
<dbReference type="EC" id="3.1.3.2"/>
<dbReference type="EMBL" id="AB009340">
    <property type="protein sequence ID" value="BAA75919.1"/>
    <property type="molecule type" value="mRNA"/>
</dbReference>
<dbReference type="RefSeq" id="NP_001075457.1">
    <property type="nucleotide sequence ID" value="NM_001081988.1"/>
</dbReference>
<dbReference type="RefSeq" id="XP_069914495.1">
    <property type="nucleotide sequence ID" value="XM_070058394.1"/>
</dbReference>
<dbReference type="SMR" id="O97860"/>
<dbReference type="FunCoup" id="O97860">
    <property type="interactions" value="11"/>
</dbReference>
<dbReference type="GlyCosmos" id="O97860">
    <property type="glycosylation" value="2 sites, No reported glycans"/>
</dbReference>
<dbReference type="GeneID" id="100008599"/>
<dbReference type="CTD" id="54"/>
<dbReference type="InParanoid" id="O97860"/>
<dbReference type="Proteomes" id="UP000001811">
    <property type="component" value="Unplaced"/>
</dbReference>
<dbReference type="GO" id="GO:0005764">
    <property type="term" value="C:lysosome"/>
    <property type="evidence" value="ECO:0007669"/>
    <property type="project" value="UniProtKB-SubCell"/>
</dbReference>
<dbReference type="GO" id="GO:0003993">
    <property type="term" value="F:acid phosphatase activity"/>
    <property type="evidence" value="ECO:0007669"/>
    <property type="project" value="UniProtKB-EC"/>
</dbReference>
<dbReference type="GO" id="GO:0008199">
    <property type="term" value="F:ferric iron binding"/>
    <property type="evidence" value="ECO:0000250"/>
    <property type="project" value="UniProtKB"/>
</dbReference>
<dbReference type="GO" id="GO:0008198">
    <property type="term" value="F:ferrous iron binding"/>
    <property type="evidence" value="ECO:0000250"/>
    <property type="project" value="UniProtKB"/>
</dbReference>
<dbReference type="GO" id="GO:0045453">
    <property type="term" value="P:bone resorption"/>
    <property type="evidence" value="ECO:0007669"/>
    <property type="project" value="TreeGrafter"/>
</dbReference>
<dbReference type="CDD" id="cd07378">
    <property type="entry name" value="MPP_ACP5"/>
    <property type="match status" value="1"/>
</dbReference>
<dbReference type="FunFam" id="3.60.21.10:FF:000033">
    <property type="entry name" value="Tartrate-resistant acid phosphatase type 5"/>
    <property type="match status" value="1"/>
</dbReference>
<dbReference type="Gene3D" id="3.60.21.10">
    <property type="match status" value="1"/>
</dbReference>
<dbReference type="InterPro" id="IPR024927">
    <property type="entry name" value="Acid_PPase"/>
</dbReference>
<dbReference type="InterPro" id="IPR004843">
    <property type="entry name" value="Calcineurin-like_PHP_ApaH"/>
</dbReference>
<dbReference type="InterPro" id="IPR029052">
    <property type="entry name" value="Metallo-depent_PP-like"/>
</dbReference>
<dbReference type="InterPro" id="IPR051558">
    <property type="entry name" value="Metallophosphoesterase_PAP"/>
</dbReference>
<dbReference type="PANTHER" id="PTHR10161">
    <property type="entry name" value="TARTRATE-RESISTANT ACID PHOSPHATASE TYPE 5"/>
    <property type="match status" value="1"/>
</dbReference>
<dbReference type="PANTHER" id="PTHR10161:SF14">
    <property type="entry name" value="TARTRATE-RESISTANT ACID PHOSPHATASE TYPE 5"/>
    <property type="match status" value="1"/>
</dbReference>
<dbReference type="Pfam" id="PF00149">
    <property type="entry name" value="Metallophos"/>
    <property type="match status" value="1"/>
</dbReference>
<dbReference type="PIRSF" id="PIRSF000898">
    <property type="entry name" value="Acid_Ptase_5"/>
    <property type="match status" value="1"/>
</dbReference>
<dbReference type="SUPFAM" id="SSF56300">
    <property type="entry name" value="Metallo-dependent phosphatases"/>
    <property type="match status" value="1"/>
</dbReference>
<reference key="1">
    <citation type="journal article" date="1998" name="Genes Cells">
        <title>Large scale isolation of osteoclast-specific genes by an improved method involving the preparation of a subtracted cDNA library.</title>
        <authorList>
            <person name="Kobori M."/>
            <person name="Ikeda Y."/>
            <person name="Nara H."/>
            <person name="Kato M."/>
            <person name="Kumegawa M."/>
            <person name="Nojima H."/>
            <person name="Kawashima H."/>
        </authorList>
    </citation>
    <scope>NUCLEOTIDE SEQUENCE [MRNA]</scope>
    <source>
        <strain>Japanese white</strain>
        <tissue>Bone</tissue>
    </source>
</reference>
<comment type="catalytic activity">
    <reaction>
        <text>a phosphate monoester + H2O = an alcohol + phosphate</text>
        <dbReference type="Rhea" id="RHEA:15017"/>
        <dbReference type="ChEBI" id="CHEBI:15377"/>
        <dbReference type="ChEBI" id="CHEBI:30879"/>
        <dbReference type="ChEBI" id="CHEBI:43474"/>
        <dbReference type="ChEBI" id="CHEBI:67140"/>
        <dbReference type="EC" id="3.1.3.2"/>
    </reaction>
</comment>
<comment type="cofactor">
    <cofactor evidence="1">
        <name>Fe cation</name>
        <dbReference type="ChEBI" id="CHEBI:24875"/>
    </cofactor>
    <text evidence="1">Binds 2 iron ions.</text>
</comment>
<comment type="subunit">
    <text evidence="1">Exists either as monomer or, after proteolytic processing, as a dimer of two chains linked by disulfide bond(s).</text>
</comment>
<comment type="subcellular location">
    <subcellularLocation>
        <location evidence="1">Lysosome</location>
    </subcellularLocation>
</comment>
<sequence length="325" mass="36624">MDTWTLLLVLHTSLLLPWAEGATPTLRFVAVGDWGGVPNAPFHTAREMANAKQIGKVVQMLGAHFILSLGDNFYFSGVQSVSDKRFQETFEDVFSDRSLQNVPWYVLAGNHDHIGNVSAQIAYSKVSKRWNFPSPFYRLRFRIPRTNVSVAIYMLDTVTLCGNSNDFLSQQPERPRNLELARTQLAWLKRHLADAKEDYVLVAGHYPVWSIAEHGPTHCLVKKLQPLLVKYGVTAYLCGHDHNLQYLQDENGVGYVLSGAGNFMDPSTQHQRSVPNGYLRFHYGAENSLGGFAYLEITPKEMTVTYMEASGKSLFKTRLPKRAKA</sequence>
<name>PPA5_RABIT</name>
<proteinExistence type="evidence at transcript level"/>
<gene>
    <name type="primary">ACP5</name>
</gene>
<organism>
    <name type="scientific">Oryctolagus cuniculus</name>
    <name type="common">Rabbit</name>
    <dbReference type="NCBI Taxonomy" id="9986"/>
    <lineage>
        <taxon>Eukaryota</taxon>
        <taxon>Metazoa</taxon>
        <taxon>Chordata</taxon>
        <taxon>Craniata</taxon>
        <taxon>Vertebrata</taxon>
        <taxon>Euteleostomi</taxon>
        <taxon>Mammalia</taxon>
        <taxon>Eutheria</taxon>
        <taxon>Euarchontoglires</taxon>
        <taxon>Glires</taxon>
        <taxon>Lagomorpha</taxon>
        <taxon>Leporidae</taxon>
        <taxon>Oryctolagus</taxon>
    </lineage>
</organism>
<feature type="signal peptide" evidence="2">
    <location>
        <begin position="1"/>
        <end position="21"/>
    </location>
</feature>
<feature type="chain" id="PRO_0000023983" description="Tartrate-resistant acid phosphatase type 5">
    <location>
        <begin position="22"/>
        <end position="325"/>
    </location>
</feature>
<feature type="glycosylation site" description="N-linked (GlcNAc...) asparagine" evidence="2">
    <location>
        <position position="116"/>
    </location>
</feature>
<feature type="glycosylation site" description="N-linked (GlcNAc...) asparagine" evidence="2">
    <location>
        <position position="147"/>
    </location>
</feature>
<keyword id="KW-1015">Disulfide bond</keyword>
<keyword id="KW-0325">Glycoprotein</keyword>
<keyword id="KW-0378">Hydrolase</keyword>
<keyword id="KW-0408">Iron</keyword>
<keyword id="KW-0458">Lysosome</keyword>
<keyword id="KW-1185">Reference proteome</keyword>
<keyword id="KW-0732">Signal</keyword>
<accession>O97860</accession>